<accession>B7N9N6</accession>
<protein>
    <recommendedName>
        <fullName evidence="1">Octanoyltransferase</fullName>
        <ecNumber evidence="1">2.3.1.181</ecNumber>
    </recommendedName>
    <alternativeName>
        <fullName evidence="1">Lipoate-protein ligase B</fullName>
    </alternativeName>
    <alternativeName>
        <fullName evidence="1">Lipoyl/octanoyl transferase</fullName>
    </alternativeName>
    <alternativeName>
        <fullName evidence="1">Octanoyl-[acyl-carrier-protein]-protein N-octanoyltransferase</fullName>
    </alternativeName>
</protein>
<evidence type="ECO:0000255" key="1">
    <source>
        <dbReference type="HAMAP-Rule" id="MF_00013"/>
    </source>
</evidence>
<evidence type="ECO:0000255" key="2">
    <source>
        <dbReference type="PROSITE-ProRule" id="PRU01067"/>
    </source>
</evidence>
<name>LIPB_ECOLU</name>
<comment type="function">
    <text evidence="1">Catalyzes the transfer of endogenously produced octanoic acid from octanoyl-acyl-carrier-protein onto the lipoyl domains of lipoate-dependent enzymes. Lipoyl-ACP can also act as a substrate although octanoyl-ACP is likely to be the physiological substrate.</text>
</comment>
<comment type="catalytic activity">
    <reaction evidence="1">
        <text>octanoyl-[ACP] + L-lysyl-[protein] = N(6)-octanoyl-L-lysyl-[protein] + holo-[ACP] + H(+)</text>
        <dbReference type="Rhea" id="RHEA:17665"/>
        <dbReference type="Rhea" id="RHEA-COMP:9636"/>
        <dbReference type="Rhea" id="RHEA-COMP:9685"/>
        <dbReference type="Rhea" id="RHEA-COMP:9752"/>
        <dbReference type="Rhea" id="RHEA-COMP:9928"/>
        <dbReference type="ChEBI" id="CHEBI:15378"/>
        <dbReference type="ChEBI" id="CHEBI:29969"/>
        <dbReference type="ChEBI" id="CHEBI:64479"/>
        <dbReference type="ChEBI" id="CHEBI:78463"/>
        <dbReference type="ChEBI" id="CHEBI:78809"/>
        <dbReference type="EC" id="2.3.1.181"/>
    </reaction>
</comment>
<comment type="pathway">
    <text evidence="1">Protein modification; protein lipoylation via endogenous pathway; protein N(6)-(lipoyl)lysine from octanoyl-[acyl-carrier-protein]: step 1/2.</text>
</comment>
<comment type="subcellular location">
    <subcellularLocation>
        <location evidence="1">Cytoplasm</location>
    </subcellularLocation>
</comment>
<comment type="miscellaneous">
    <text evidence="1">In the reaction, the free carboxyl group of octanoic acid is attached via an amide linkage to the epsilon-amino group of a specific lysine residue of lipoyl domains of lipoate-dependent enzymes.</text>
</comment>
<comment type="similarity">
    <text evidence="1">Belongs to the LipB family.</text>
</comment>
<dbReference type="EC" id="2.3.1.181" evidence="1"/>
<dbReference type="EMBL" id="CU928163">
    <property type="protein sequence ID" value="CAR11937.1"/>
    <property type="molecule type" value="Genomic_DNA"/>
</dbReference>
<dbReference type="RefSeq" id="WP_000284040.1">
    <property type="nucleotide sequence ID" value="NC_011751.1"/>
</dbReference>
<dbReference type="RefSeq" id="YP_002411483.1">
    <property type="nucleotide sequence ID" value="NC_011751.1"/>
</dbReference>
<dbReference type="SMR" id="B7N9N6"/>
<dbReference type="STRING" id="585056.ECUMN_0723"/>
<dbReference type="KEGG" id="eum:ECUMN_0723"/>
<dbReference type="PATRIC" id="fig|585056.7.peg.921"/>
<dbReference type="HOGENOM" id="CLU_035168_3_1_6"/>
<dbReference type="UniPathway" id="UPA00538">
    <property type="reaction ID" value="UER00592"/>
</dbReference>
<dbReference type="Proteomes" id="UP000007097">
    <property type="component" value="Chromosome"/>
</dbReference>
<dbReference type="GO" id="GO:0005737">
    <property type="term" value="C:cytoplasm"/>
    <property type="evidence" value="ECO:0007669"/>
    <property type="project" value="UniProtKB-SubCell"/>
</dbReference>
<dbReference type="GO" id="GO:0033819">
    <property type="term" value="F:lipoyl(octanoyl) transferase activity"/>
    <property type="evidence" value="ECO:0007669"/>
    <property type="project" value="UniProtKB-EC"/>
</dbReference>
<dbReference type="GO" id="GO:0036211">
    <property type="term" value="P:protein modification process"/>
    <property type="evidence" value="ECO:0007669"/>
    <property type="project" value="InterPro"/>
</dbReference>
<dbReference type="CDD" id="cd16444">
    <property type="entry name" value="LipB"/>
    <property type="match status" value="1"/>
</dbReference>
<dbReference type="FunFam" id="3.30.930.10:FF:000020">
    <property type="entry name" value="Octanoyltransferase"/>
    <property type="match status" value="1"/>
</dbReference>
<dbReference type="Gene3D" id="3.30.930.10">
    <property type="entry name" value="Bira Bifunctional Protein, Domain 2"/>
    <property type="match status" value="1"/>
</dbReference>
<dbReference type="HAMAP" id="MF_00013">
    <property type="entry name" value="LipB"/>
    <property type="match status" value="1"/>
</dbReference>
<dbReference type="InterPro" id="IPR045864">
    <property type="entry name" value="aa-tRNA-synth_II/BPL/LPL"/>
</dbReference>
<dbReference type="InterPro" id="IPR004143">
    <property type="entry name" value="BPL_LPL_catalytic"/>
</dbReference>
<dbReference type="InterPro" id="IPR000544">
    <property type="entry name" value="Octanoyltransferase"/>
</dbReference>
<dbReference type="InterPro" id="IPR020605">
    <property type="entry name" value="Octanoyltransferase_CS"/>
</dbReference>
<dbReference type="NCBIfam" id="TIGR00214">
    <property type="entry name" value="lipB"/>
    <property type="match status" value="1"/>
</dbReference>
<dbReference type="NCBIfam" id="NF010922">
    <property type="entry name" value="PRK14342.1"/>
    <property type="match status" value="1"/>
</dbReference>
<dbReference type="PANTHER" id="PTHR10993:SF7">
    <property type="entry name" value="LIPOYLTRANSFERASE 2, MITOCHONDRIAL-RELATED"/>
    <property type="match status" value="1"/>
</dbReference>
<dbReference type="PANTHER" id="PTHR10993">
    <property type="entry name" value="OCTANOYLTRANSFERASE"/>
    <property type="match status" value="1"/>
</dbReference>
<dbReference type="Pfam" id="PF21948">
    <property type="entry name" value="LplA-B_cat"/>
    <property type="match status" value="1"/>
</dbReference>
<dbReference type="PIRSF" id="PIRSF016262">
    <property type="entry name" value="LPLase"/>
    <property type="match status" value="1"/>
</dbReference>
<dbReference type="SUPFAM" id="SSF55681">
    <property type="entry name" value="Class II aaRS and biotin synthetases"/>
    <property type="match status" value="1"/>
</dbReference>
<dbReference type="PROSITE" id="PS51733">
    <property type="entry name" value="BPL_LPL_CATALYTIC"/>
    <property type="match status" value="1"/>
</dbReference>
<dbReference type="PROSITE" id="PS01313">
    <property type="entry name" value="LIPB"/>
    <property type="match status" value="1"/>
</dbReference>
<proteinExistence type="inferred from homology"/>
<feature type="chain" id="PRO_1000116283" description="Octanoyltransferase">
    <location>
        <begin position="1"/>
        <end position="213"/>
    </location>
</feature>
<feature type="domain" description="BPL/LPL catalytic" evidence="2">
    <location>
        <begin position="32"/>
        <end position="207"/>
    </location>
</feature>
<feature type="active site" description="Acyl-thioester intermediate" evidence="1">
    <location>
        <position position="169"/>
    </location>
</feature>
<feature type="binding site" evidence="1">
    <location>
        <begin position="71"/>
        <end position="78"/>
    </location>
    <ligand>
        <name>substrate</name>
    </ligand>
</feature>
<feature type="binding site" evidence="1">
    <location>
        <begin position="138"/>
        <end position="140"/>
    </location>
    <ligand>
        <name>substrate</name>
    </ligand>
</feature>
<feature type="binding site" evidence="1">
    <location>
        <begin position="151"/>
        <end position="153"/>
    </location>
    <ligand>
        <name>substrate</name>
    </ligand>
</feature>
<feature type="site" description="Lowers pKa of active site Cys" evidence="1">
    <location>
        <position position="135"/>
    </location>
</feature>
<gene>
    <name evidence="1" type="primary">lipB</name>
    <name type="ordered locus">ECUMN_0723</name>
</gene>
<keyword id="KW-0012">Acyltransferase</keyword>
<keyword id="KW-0963">Cytoplasm</keyword>
<keyword id="KW-0808">Transferase</keyword>
<reference key="1">
    <citation type="journal article" date="2009" name="PLoS Genet.">
        <title>Organised genome dynamics in the Escherichia coli species results in highly diverse adaptive paths.</title>
        <authorList>
            <person name="Touchon M."/>
            <person name="Hoede C."/>
            <person name="Tenaillon O."/>
            <person name="Barbe V."/>
            <person name="Baeriswyl S."/>
            <person name="Bidet P."/>
            <person name="Bingen E."/>
            <person name="Bonacorsi S."/>
            <person name="Bouchier C."/>
            <person name="Bouvet O."/>
            <person name="Calteau A."/>
            <person name="Chiapello H."/>
            <person name="Clermont O."/>
            <person name="Cruveiller S."/>
            <person name="Danchin A."/>
            <person name="Diard M."/>
            <person name="Dossat C."/>
            <person name="Karoui M.E."/>
            <person name="Frapy E."/>
            <person name="Garry L."/>
            <person name="Ghigo J.M."/>
            <person name="Gilles A.M."/>
            <person name="Johnson J."/>
            <person name="Le Bouguenec C."/>
            <person name="Lescat M."/>
            <person name="Mangenot S."/>
            <person name="Martinez-Jehanne V."/>
            <person name="Matic I."/>
            <person name="Nassif X."/>
            <person name="Oztas S."/>
            <person name="Petit M.A."/>
            <person name="Pichon C."/>
            <person name="Rouy Z."/>
            <person name="Ruf C.S."/>
            <person name="Schneider D."/>
            <person name="Tourret J."/>
            <person name="Vacherie B."/>
            <person name="Vallenet D."/>
            <person name="Medigue C."/>
            <person name="Rocha E.P.C."/>
            <person name="Denamur E."/>
        </authorList>
    </citation>
    <scope>NUCLEOTIDE SEQUENCE [LARGE SCALE GENOMIC DNA]</scope>
    <source>
        <strain>UMN026 / ExPEC</strain>
    </source>
</reference>
<organism>
    <name type="scientific">Escherichia coli O17:K52:H18 (strain UMN026 / ExPEC)</name>
    <dbReference type="NCBI Taxonomy" id="585056"/>
    <lineage>
        <taxon>Bacteria</taxon>
        <taxon>Pseudomonadati</taxon>
        <taxon>Pseudomonadota</taxon>
        <taxon>Gammaproteobacteria</taxon>
        <taxon>Enterobacterales</taxon>
        <taxon>Enterobacteriaceae</taxon>
        <taxon>Escherichia</taxon>
    </lineage>
</organism>
<sequence length="213" mass="23897">MYQDKILVRQLGLQPYEPISQAMHEFTDTRDESTLDEIWLVEHYPVFTQGQAGKAEHILMPGDIPVIQSDRGGQVTYHGPGQQVMYVLLNLKRRKLGVRELVTLLEQTVVNTLAELGIEAHPRADAPGVYVGEKKICSLGLRIRRGCSFHGLALNVNMDLSPFLRINPCGYAGMEMAKISQWKPEATTNNIAPRLLENILALLNNPDFEYITA</sequence>